<sequence>MLNMRKTHPLLKIINHSFIDLPAPSNISAWWNFGSLLGVCLIIQILTGLFLAMHYTSDTLTAFSSVAHICRDVNHGWLLRNLHANGASMFFMCLFLHVGRGIYYGSYLYKETWNIGVILLLTVMAMAFVGYVLPWGQMSFWGATVITNLLSAIPYIGTTLAEWIWGGFAVDKATLTRFFAFHFILPFIITPLAIVHLLFLHETGSNNPSGINPDSDKIPFHPYYTIKDALGFMLLLLILLLLALFSPDLLGDPDNFSPANPLNTPPHIKPEWYFLFAYAILRSIPNKLGGVLALLASILILLIIPLLHTANQRSMMFRPVSQTLFWILTANLITLTWIGGQPVEQPFIIIGQLASMLYFTLILVLMPFAGLFENYMLKPKW</sequence>
<protein>
    <recommendedName>
        <fullName>Cytochrome b</fullName>
    </recommendedName>
    <alternativeName>
        <fullName>Complex III subunit 3</fullName>
    </alternativeName>
    <alternativeName>
        <fullName>Complex III subunit III</fullName>
    </alternativeName>
    <alternativeName>
        <fullName>Cytochrome b-c1 complex subunit 3</fullName>
    </alternativeName>
    <alternativeName>
        <fullName>Ubiquinol-cytochrome-c reductase complex cytochrome b subunit</fullName>
    </alternativeName>
</protein>
<keyword id="KW-0249">Electron transport</keyword>
<keyword id="KW-0349">Heme</keyword>
<keyword id="KW-0408">Iron</keyword>
<keyword id="KW-0472">Membrane</keyword>
<keyword id="KW-0479">Metal-binding</keyword>
<keyword id="KW-0496">Mitochondrion</keyword>
<keyword id="KW-0999">Mitochondrion inner membrane</keyword>
<keyword id="KW-0679">Respiratory chain</keyword>
<keyword id="KW-0812">Transmembrane</keyword>
<keyword id="KW-1133">Transmembrane helix</keyword>
<keyword id="KW-0813">Transport</keyword>
<keyword id="KW-0830">Ubiquinone</keyword>
<dbReference type="EMBL" id="AF010266">
    <property type="protein sequence ID" value="AAB69296.1"/>
    <property type="molecule type" value="Genomic_DNA"/>
</dbReference>
<dbReference type="SMR" id="O20604"/>
<dbReference type="GO" id="GO:0005743">
    <property type="term" value="C:mitochondrial inner membrane"/>
    <property type="evidence" value="ECO:0007669"/>
    <property type="project" value="UniProtKB-SubCell"/>
</dbReference>
<dbReference type="GO" id="GO:0045275">
    <property type="term" value="C:respiratory chain complex III"/>
    <property type="evidence" value="ECO:0007669"/>
    <property type="project" value="InterPro"/>
</dbReference>
<dbReference type="GO" id="GO:0046872">
    <property type="term" value="F:metal ion binding"/>
    <property type="evidence" value="ECO:0007669"/>
    <property type="project" value="UniProtKB-KW"/>
</dbReference>
<dbReference type="GO" id="GO:0008121">
    <property type="term" value="F:ubiquinol-cytochrome-c reductase activity"/>
    <property type="evidence" value="ECO:0007669"/>
    <property type="project" value="InterPro"/>
</dbReference>
<dbReference type="GO" id="GO:0006122">
    <property type="term" value="P:mitochondrial electron transport, ubiquinol to cytochrome c"/>
    <property type="evidence" value="ECO:0007669"/>
    <property type="project" value="TreeGrafter"/>
</dbReference>
<dbReference type="CDD" id="cd00290">
    <property type="entry name" value="cytochrome_b_C"/>
    <property type="match status" value="1"/>
</dbReference>
<dbReference type="CDD" id="cd00284">
    <property type="entry name" value="Cytochrome_b_N"/>
    <property type="match status" value="1"/>
</dbReference>
<dbReference type="FunFam" id="1.20.810.10:FF:000002">
    <property type="entry name" value="Cytochrome b"/>
    <property type="match status" value="1"/>
</dbReference>
<dbReference type="Gene3D" id="1.20.810.10">
    <property type="entry name" value="Cytochrome Bc1 Complex, Chain C"/>
    <property type="match status" value="1"/>
</dbReference>
<dbReference type="InterPro" id="IPR005798">
    <property type="entry name" value="Cyt_b/b6_C"/>
</dbReference>
<dbReference type="InterPro" id="IPR036150">
    <property type="entry name" value="Cyt_b/b6_C_sf"/>
</dbReference>
<dbReference type="InterPro" id="IPR005797">
    <property type="entry name" value="Cyt_b/b6_N"/>
</dbReference>
<dbReference type="InterPro" id="IPR027387">
    <property type="entry name" value="Cytb/b6-like_sf"/>
</dbReference>
<dbReference type="InterPro" id="IPR030689">
    <property type="entry name" value="Cytochrome_b"/>
</dbReference>
<dbReference type="InterPro" id="IPR048260">
    <property type="entry name" value="Cytochrome_b_C_euk/bac"/>
</dbReference>
<dbReference type="InterPro" id="IPR048259">
    <property type="entry name" value="Cytochrome_b_N_euk/bac"/>
</dbReference>
<dbReference type="InterPro" id="IPR016174">
    <property type="entry name" value="Di-haem_cyt_TM"/>
</dbReference>
<dbReference type="PANTHER" id="PTHR19271">
    <property type="entry name" value="CYTOCHROME B"/>
    <property type="match status" value="1"/>
</dbReference>
<dbReference type="PANTHER" id="PTHR19271:SF16">
    <property type="entry name" value="CYTOCHROME B"/>
    <property type="match status" value="1"/>
</dbReference>
<dbReference type="Pfam" id="PF00032">
    <property type="entry name" value="Cytochrom_B_C"/>
    <property type="match status" value="1"/>
</dbReference>
<dbReference type="Pfam" id="PF00033">
    <property type="entry name" value="Cytochrome_B"/>
    <property type="match status" value="1"/>
</dbReference>
<dbReference type="PIRSF" id="PIRSF038885">
    <property type="entry name" value="COB"/>
    <property type="match status" value="1"/>
</dbReference>
<dbReference type="SUPFAM" id="SSF81648">
    <property type="entry name" value="a domain/subunit of cytochrome bc1 complex (Ubiquinol-cytochrome c reductase)"/>
    <property type="match status" value="1"/>
</dbReference>
<dbReference type="SUPFAM" id="SSF81342">
    <property type="entry name" value="Transmembrane di-heme cytochromes"/>
    <property type="match status" value="1"/>
</dbReference>
<dbReference type="PROSITE" id="PS51003">
    <property type="entry name" value="CYTB_CTER"/>
    <property type="match status" value="1"/>
</dbReference>
<dbReference type="PROSITE" id="PS51002">
    <property type="entry name" value="CYTB_NTER"/>
    <property type="match status" value="1"/>
</dbReference>
<proteinExistence type="inferred from homology"/>
<comment type="function">
    <text evidence="2">Component of the ubiquinol-cytochrome c reductase complex (complex III or cytochrome b-c1 complex) that is part of the mitochondrial respiratory chain. The b-c1 complex mediates electron transfer from ubiquinol to cytochrome c. Contributes to the generation of a proton gradient across the mitochondrial membrane that is then used for ATP synthesis.</text>
</comment>
<comment type="cofactor">
    <cofactor evidence="2">
        <name>heme b</name>
        <dbReference type="ChEBI" id="CHEBI:60344"/>
    </cofactor>
    <text evidence="2">Binds 2 heme b groups non-covalently.</text>
</comment>
<comment type="subunit">
    <text evidence="2">The cytochrome bc1 complex contains 11 subunits: 3 respiratory subunits (MT-CYB, CYC1 and UQCRFS1), 2 core proteins (UQCRC1 and UQCRC2) and 6 low-molecular weight proteins (UQCRH/QCR6, UQCRB/QCR7, UQCRQ/QCR8, UQCR10/QCR9, UQCR11/QCR10 and a cleavage product of UQCRFS1). This cytochrome bc1 complex then forms a dimer.</text>
</comment>
<comment type="subcellular location">
    <subcellularLocation>
        <location evidence="2">Mitochondrion inner membrane</location>
        <topology evidence="2">Multi-pass membrane protein</topology>
    </subcellularLocation>
</comment>
<comment type="miscellaneous">
    <text evidence="1">Heme 1 (or BL or b562) is low-potential and absorbs at about 562 nm, and heme 2 (or BH or b566) is high-potential and absorbs at about 566 nm.</text>
</comment>
<comment type="similarity">
    <text evidence="3 4">Belongs to the cytochrome b family.</text>
</comment>
<comment type="caution">
    <text evidence="2">The full-length protein contains only eight transmembrane helices, not nine as predicted by bioinformatics tools.</text>
</comment>
<reference key="1">
    <citation type="journal article" date="1997" name="J. Mammal. Evol.">
        <title>Reconstructing the taxonomic radiation of dasyurine marsupials with cytochrome b, 12S rRNA, and protamine P1 gene trees.</title>
        <authorList>
            <person name="Krajewski C."/>
            <person name="Young J."/>
            <person name="Buckley L."/>
            <person name="Woolley P.A."/>
            <person name="Westerman M."/>
        </authorList>
    </citation>
    <scope>NUCLEOTIDE SEQUENCE [GENOMIC DNA]</scope>
</reference>
<evidence type="ECO:0000250" key="1"/>
<evidence type="ECO:0000250" key="2">
    <source>
        <dbReference type="UniProtKB" id="P00157"/>
    </source>
</evidence>
<evidence type="ECO:0000255" key="3">
    <source>
        <dbReference type="PROSITE-ProRule" id="PRU00967"/>
    </source>
</evidence>
<evidence type="ECO:0000255" key="4">
    <source>
        <dbReference type="PROSITE-ProRule" id="PRU00968"/>
    </source>
</evidence>
<gene>
    <name type="primary">MT-CYB</name>
    <name type="synonym">COB</name>
    <name type="synonym">CYTB</name>
    <name type="synonym">MTCYB</name>
</gene>
<organism>
    <name type="scientific">Dasyurus geoffroii</name>
    <name type="common">Western quoll</name>
    <name type="synonym">Chuditch</name>
    <dbReference type="NCBI Taxonomy" id="63143"/>
    <lineage>
        <taxon>Eukaryota</taxon>
        <taxon>Metazoa</taxon>
        <taxon>Chordata</taxon>
        <taxon>Craniata</taxon>
        <taxon>Vertebrata</taxon>
        <taxon>Euteleostomi</taxon>
        <taxon>Mammalia</taxon>
        <taxon>Metatheria</taxon>
        <taxon>Dasyuromorphia</taxon>
        <taxon>Dasyuridae</taxon>
        <taxon>Dasyurus</taxon>
    </lineage>
</organism>
<accession>O20604</accession>
<feature type="chain" id="PRO_0000060864" description="Cytochrome b">
    <location>
        <begin position="1"/>
        <end position="381"/>
    </location>
</feature>
<feature type="transmembrane region" description="Helical" evidence="2">
    <location>
        <begin position="33"/>
        <end position="53"/>
    </location>
</feature>
<feature type="transmembrane region" description="Helical" evidence="2">
    <location>
        <begin position="77"/>
        <end position="98"/>
    </location>
</feature>
<feature type="transmembrane region" description="Helical" evidence="2">
    <location>
        <begin position="113"/>
        <end position="133"/>
    </location>
</feature>
<feature type="transmembrane region" description="Helical" evidence="2">
    <location>
        <begin position="178"/>
        <end position="198"/>
    </location>
</feature>
<feature type="transmembrane region" description="Helical" evidence="2">
    <location>
        <begin position="226"/>
        <end position="246"/>
    </location>
</feature>
<feature type="transmembrane region" description="Helical" evidence="2">
    <location>
        <begin position="288"/>
        <end position="308"/>
    </location>
</feature>
<feature type="transmembrane region" description="Helical" evidence="2">
    <location>
        <begin position="320"/>
        <end position="340"/>
    </location>
</feature>
<feature type="transmembrane region" description="Helical" evidence="2">
    <location>
        <begin position="347"/>
        <end position="367"/>
    </location>
</feature>
<feature type="binding site" description="axial binding residue" evidence="2">
    <location>
        <position position="83"/>
    </location>
    <ligand>
        <name>heme b</name>
        <dbReference type="ChEBI" id="CHEBI:60344"/>
        <label>b562</label>
    </ligand>
    <ligandPart>
        <name>Fe</name>
        <dbReference type="ChEBI" id="CHEBI:18248"/>
    </ligandPart>
</feature>
<feature type="binding site" description="axial binding residue" evidence="2">
    <location>
        <position position="97"/>
    </location>
    <ligand>
        <name>heme b</name>
        <dbReference type="ChEBI" id="CHEBI:60344"/>
        <label>b566</label>
    </ligand>
    <ligandPart>
        <name>Fe</name>
        <dbReference type="ChEBI" id="CHEBI:18248"/>
    </ligandPart>
</feature>
<feature type="binding site" description="axial binding residue" evidence="2">
    <location>
        <position position="182"/>
    </location>
    <ligand>
        <name>heme b</name>
        <dbReference type="ChEBI" id="CHEBI:60344"/>
        <label>b562</label>
    </ligand>
    <ligandPart>
        <name>Fe</name>
        <dbReference type="ChEBI" id="CHEBI:18248"/>
    </ligandPart>
</feature>
<feature type="binding site" description="axial binding residue" evidence="2">
    <location>
        <position position="196"/>
    </location>
    <ligand>
        <name>heme b</name>
        <dbReference type="ChEBI" id="CHEBI:60344"/>
        <label>b566</label>
    </ligand>
    <ligandPart>
        <name>Fe</name>
        <dbReference type="ChEBI" id="CHEBI:18248"/>
    </ligandPart>
</feature>
<feature type="binding site" evidence="2">
    <location>
        <position position="201"/>
    </location>
    <ligand>
        <name>a ubiquinone</name>
        <dbReference type="ChEBI" id="CHEBI:16389"/>
    </ligand>
</feature>
<geneLocation type="mitochondrion"/>
<name>CYB_DASGE</name>